<gene>
    <name type="primary">roaA</name>
    <name type="synonym">ycf82</name>
</gene>
<feature type="chain" id="PRO_0000217292" description="Ribosomal operon-associated A protein">
    <location>
        <begin position="1"/>
        <end position="519"/>
    </location>
</feature>
<sequence length="519" mass="64997">MFSNYLLSFSYRLNWDFIKWNLVDNIISLFHHEIHILSKNLNFRSIKKKQHLLFKSFYTRFVSVRDSVDNNFFFKSNIISSKEKFFIVFFLCYKRNFFYNLFFYNIEIINLSFKFNFFLFYKFCFNNLVKFVMYPFLELKTENFVFNFNFYTNLYDIFLNFKKILLKNFMKLYYFTINFNNKFNYMNKKWLYKNLTFNINFLKYFLKLNNFIFNGSILFFIFNFMFNGLKSFIQRKCFMNNEFIYVSSLKNIYFFFKSYNEFNICINYLIYFLKYKGINFNFINDHVKNFLTNGLTFNFIKFFNFGYKFLFKLNEKDINYYKFNIKTLIKNFYIKNIFYTICLINNKIKNWLDKYFLFVNKKYLFLELDIFISKLLWIKIKKYHPKKSNIWIYSKYWKNFSGIWKFFIINNISGKMIFLKYHYDFNNYLLYLKSNYSGTFSYLYTFNLYNSNKKKNFLFEKFKYKFFPKFLDLYITQKGQCYICKKHIYSKKFKIIKLKFDNNKFSKNIYLLHFYCNFI</sequence>
<reference key="1">
    <citation type="journal article" date="2000" name="Protist">
        <title>Complete gene map of the plastid genome of the nonphotosynthetic euglenoid flagellate Astasia longa.</title>
        <authorList>
            <person name="Gockel G."/>
            <person name="Hachtel W."/>
        </authorList>
    </citation>
    <scope>NUCLEOTIDE SEQUENCE [LARGE SCALE GENOMIC DNA]</scope>
    <source>
        <strain>CCAP 1204-17a</strain>
    </source>
</reference>
<name>ROAA_EUGLO</name>
<accession>P58145</accession>
<protein>
    <recommendedName>
        <fullName>Ribosomal operon-associated A protein</fullName>
        <shortName>RoaA</shortName>
    </recommendedName>
</protein>
<organism>
    <name type="scientific">Euglena longa</name>
    <name type="common">Euglenophycean alga</name>
    <name type="synonym">Astasia longa</name>
    <dbReference type="NCBI Taxonomy" id="3037"/>
    <lineage>
        <taxon>Eukaryota</taxon>
        <taxon>Discoba</taxon>
        <taxon>Euglenozoa</taxon>
        <taxon>Euglenida</taxon>
        <taxon>Spirocuta</taxon>
        <taxon>Euglenophyceae</taxon>
        <taxon>Euglenales</taxon>
        <taxon>Euglenaceae</taxon>
        <taxon>Euglena</taxon>
    </lineage>
</organism>
<evidence type="ECO:0000305" key="1"/>
<dbReference type="EMBL" id="AJ294725">
    <property type="protein sequence ID" value="CAC24599.1"/>
    <property type="molecule type" value="Genomic_DNA"/>
</dbReference>
<dbReference type="RefSeq" id="NP_074988.1">
    <property type="nucleotide sequence ID" value="NC_002652.1"/>
</dbReference>
<dbReference type="SMR" id="P58145"/>
<dbReference type="GO" id="GO:0009536">
    <property type="term" value="C:plastid"/>
    <property type="evidence" value="ECO:0007669"/>
    <property type="project" value="UniProtKB-SubCell"/>
</dbReference>
<comment type="subcellular location">
    <subcellularLocation>
        <location>Plastid</location>
    </subcellularLocation>
</comment>
<comment type="similarity">
    <text evidence="1">Belongs to the roaA family.</text>
</comment>
<proteinExistence type="inferred from homology"/>
<geneLocation type="non-photosynthetic plastid"/>
<keyword id="KW-0934">Plastid</keyword>